<comment type="function">
    <text evidence="1">Functions as an E3-type small ubiquitin-like modifier (SUMO) ligase, stabilizing the interaction between UBE2I and the substrate, and as a SUMO-tethering factor. Plays a crucial role as a transcriptional coregulation in various cellular pathways, including the STAT pathway, the p53 pathway and the steroid hormone signaling pathway. The effects of this transcriptional coregulation, transactivation or silencing may vary depending upon the biological context and PIAS2 isoform studied. However, it seems to be mostly involved in gene silencing. Binds to sumoylated ELK1 and enhances its transcriptional activity by preventing recruitment of HDAC2 by ELK1, thus reversing SUMO-mediated repression of ELK1 transactivation activity. Isoform PIASx-beta, but not isoform PIASx-alpha, promotes MDM2 sumoylation. Isoform PIASx-alpha promotes PARK7 sumoylation. Isoform PIASx-beta promotes NCOA2 sumoylation more efficiently than isoform PIASx-alpha (By similarity). Sumoylates PML at'Lys-65' and 'Lys-160' (By similarity).</text>
</comment>
<comment type="catalytic activity">
    <reaction>
        <text>S-ubiquitinyl-[E2 ubiquitin-conjugating enzyme]-L-cysteine + [acceptor protein]-L-lysine = [E2 ubiquitin-conjugating enzyme]-L-cysteine + N(6)-ubiquitinyl-[acceptor protein]-L-lysine.</text>
        <dbReference type="EC" id="2.3.2.27"/>
    </reaction>
</comment>
<comment type="pathway">
    <text>Protein modification; protein sumoylation.</text>
</comment>
<comment type="subunit">
    <text evidence="1 2">Binds SUMO1 and UBE2I. Interacts with AXIN1, JUN, MDM2, PARK7, TP53 and TP73 isoform alpha, but not TP73 isoform beta. Interacts with STAT4 following IL12 and IFN-alpha stimulation of T-cells. Interacts also with GTF2I, GTF2IRD1, IKFZ1, DAB2 and MSX2, as well as with several steroid receptors, including ESR1, ESR2, NR3C1, PGR, AR, and with NCOA2. Sumoylation of a target protein seems to enhance the interaction. Binds to sumoylated ELK1. Interacts with PLAG1 (By similarity). Binds DNA, such as CDKN1A promoter, in a sequence-specific manner. Interacts with KLF8; the interaction results in SUMO ligation and repression of KLF8 transcriptional activity and of its cell cycle progression into G(1) phase (By similarity). Interacts with IFIH1/MDA5 (By similarity). Interacts with PML (By similarity). Interacts with PRDM1 (By similarity).</text>
</comment>
<comment type="interaction">
    <interactant intactId="EBI-6305825">
        <id>Q8C5D8</id>
    </interactant>
    <interactant intactId="EBI-1391846">
        <id>P98078</id>
        <label>Dab2</label>
    </interactant>
    <organismsDiffer>false</organismsDiffer>
    <experiments>2</experiments>
</comment>
<comment type="interaction">
    <interactant intactId="EBI-6305825">
        <id>Q8C5D8</id>
    </interactant>
    <interactant intactId="EBI-6305891">
        <id>P98078-3</id>
        <label>Dab2</label>
    </interactant>
    <organismsDiffer>false</organismsDiffer>
    <experiments>3</experiments>
</comment>
<comment type="interaction">
    <interactant intactId="EBI-8064899">
        <id>Q8C5D8-1</id>
    </interactant>
    <interactant intactId="EBI-7070449">
        <id>P08152</id>
        <label>Egr2</label>
    </interactant>
    <organismsDiffer>false</organismsDiffer>
    <experiments>5</experiments>
</comment>
<comment type="subcellular location">
    <subcellularLocation>
        <location evidence="7">Nucleus speckle</location>
    </subcellularLocation>
    <subcellularLocation>
        <location evidence="2">Nucleus</location>
        <location evidence="2">PML body</location>
    </subcellularLocation>
    <subcellularLocation>
        <location evidence="8">Nucleus</location>
    </subcellularLocation>
    <text evidence="2 7">Colocalizes at least partially with promyelocytic leukemia nuclear bodies (PML NBs) (By similarity). Colocalizes with SUMO1 in nuclear granules (PubMed:12077349).</text>
</comment>
<comment type="alternative products">
    <event type="alternative splicing"/>
    <isoform>
        <id>Q8C5D8-1</id>
        <name>1</name>
        <name>PIASx-beta</name>
        <name>Miz1</name>
        <sequence type="displayed"/>
    </isoform>
    <isoform>
        <id>Q8C5D8-2</id>
        <name>2</name>
        <name>PIASx-alpha</name>
        <name>ARIP3</name>
        <sequence type="described" ref="VSP_012199 VSP_012201"/>
    </isoform>
    <isoform>
        <id>Q8C5D8-3</id>
        <name>3</name>
        <sequence type="described" ref="VSP_012198 VSP_012199 VSP_012201"/>
    </isoform>
    <isoform>
        <id>Q8C5D8-4</id>
        <name>4</name>
        <sequence type="described" ref="VSP_012200 VSP_012202"/>
    </isoform>
    <isoform>
        <id>Q8C5D8-5</id>
        <name>5</name>
        <sequence type="described" ref="VSP_012198"/>
    </isoform>
</comment>
<comment type="domain">
    <text>The LXXLL motif is a transcriptional coregulator signature.</text>
</comment>
<comment type="PTM">
    <text evidence="7">Sumoylated.</text>
</comment>
<comment type="similarity">
    <text evidence="12">Belongs to the PIAS family.</text>
</comment>
<comment type="sequence caution" evidence="12">
    <conflict type="erroneous initiation">
        <sequence resource="EMBL-CDS" id="AAB96678"/>
    </conflict>
</comment>
<comment type="sequence caution" evidence="12">
    <conflict type="frameshift">
        <sequence resource="EMBL-CDS" id="BAB29594"/>
    </conflict>
</comment>
<reference key="1">
    <citation type="journal article" date="2000" name="Biochem. J.">
        <title>p67 isoform of mouse disabled 2 protein acts as a transcriptional activator during the differentiation of F9 cells.</title>
        <authorList>
            <person name="Cho S.-Y."/>
            <person name="Jeon J.W."/>
            <person name="Lee S.H."/>
            <person name="Park S.-S."/>
        </authorList>
    </citation>
    <scope>NUCLEOTIDE SEQUENCE [MRNA] (ISOFORM 2)</scope>
    <scope>INTERACTION WITH DAB2</scope>
    <source>
        <strain>129</strain>
        <tissue>Teratocarcinoma</tissue>
    </source>
</reference>
<reference key="2">
    <citation type="journal article" date="2005" name="Science">
        <title>The transcriptional landscape of the mammalian genome.</title>
        <authorList>
            <person name="Carninci P."/>
            <person name="Kasukawa T."/>
            <person name="Katayama S."/>
            <person name="Gough J."/>
            <person name="Frith M.C."/>
            <person name="Maeda N."/>
            <person name="Oyama R."/>
            <person name="Ravasi T."/>
            <person name="Lenhard B."/>
            <person name="Wells C."/>
            <person name="Kodzius R."/>
            <person name="Shimokawa K."/>
            <person name="Bajic V.B."/>
            <person name="Brenner S.E."/>
            <person name="Batalov S."/>
            <person name="Forrest A.R."/>
            <person name="Zavolan M."/>
            <person name="Davis M.J."/>
            <person name="Wilming L.G."/>
            <person name="Aidinis V."/>
            <person name="Allen J.E."/>
            <person name="Ambesi-Impiombato A."/>
            <person name="Apweiler R."/>
            <person name="Aturaliya R.N."/>
            <person name="Bailey T.L."/>
            <person name="Bansal M."/>
            <person name="Baxter L."/>
            <person name="Beisel K.W."/>
            <person name="Bersano T."/>
            <person name="Bono H."/>
            <person name="Chalk A.M."/>
            <person name="Chiu K.P."/>
            <person name="Choudhary V."/>
            <person name="Christoffels A."/>
            <person name="Clutterbuck D.R."/>
            <person name="Crowe M.L."/>
            <person name="Dalla E."/>
            <person name="Dalrymple B.P."/>
            <person name="de Bono B."/>
            <person name="Della Gatta G."/>
            <person name="di Bernardo D."/>
            <person name="Down T."/>
            <person name="Engstrom P."/>
            <person name="Fagiolini M."/>
            <person name="Faulkner G."/>
            <person name="Fletcher C.F."/>
            <person name="Fukushima T."/>
            <person name="Furuno M."/>
            <person name="Futaki S."/>
            <person name="Gariboldi M."/>
            <person name="Georgii-Hemming P."/>
            <person name="Gingeras T.R."/>
            <person name="Gojobori T."/>
            <person name="Green R.E."/>
            <person name="Gustincich S."/>
            <person name="Harbers M."/>
            <person name="Hayashi Y."/>
            <person name="Hensch T.K."/>
            <person name="Hirokawa N."/>
            <person name="Hill D."/>
            <person name="Huminiecki L."/>
            <person name="Iacono M."/>
            <person name="Ikeo K."/>
            <person name="Iwama A."/>
            <person name="Ishikawa T."/>
            <person name="Jakt M."/>
            <person name="Kanapin A."/>
            <person name="Katoh M."/>
            <person name="Kawasawa Y."/>
            <person name="Kelso J."/>
            <person name="Kitamura H."/>
            <person name="Kitano H."/>
            <person name="Kollias G."/>
            <person name="Krishnan S.P."/>
            <person name="Kruger A."/>
            <person name="Kummerfeld S.K."/>
            <person name="Kurochkin I.V."/>
            <person name="Lareau L.F."/>
            <person name="Lazarevic D."/>
            <person name="Lipovich L."/>
            <person name="Liu J."/>
            <person name="Liuni S."/>
            <person name="McWilliam S."/>
            <person name="Madan Babu M."/>
            <person name="Madera M."/>
            <person name="Marchionni L."/>
            <person name="Matsuda H."/>
            <person name="Matsuzawa S."/>
            <person name="Miki H."/>
            <person name="Mignone F."/>
            <person name="Miyake S."/>
            <person name="Morris K."/>
            <person name="Mottagui-Tabar S."/>
            <person name="Mulder N."/>
            <person name="Nakano N."/>
            <person name="Nakauchi H."/>
            <person name="Ng P."/>
            <person name="Nilsson R."/>
            <person name="Nishiguchi S."/>
            <person name="Nishikawa S."/>
            <person name="Nori F."/>
            <person name="Ohara O."/>
            <person name="Okazaki Y."/>
            <person name="Orlando V."/>
            <person name="Pang K.C."/>
            <person name="Pavan W.J."/>
            <person name="Pavesi G."/>
            <person name="Pesole G."/>
            <person name="Petrovsky N."/>
            <person name="Piazza S."/>
            <person name="Reed J."/>
            <person name="Reid J.F."/>
            <person name="Ring B.Z."/>
            <person name="Ringwald M."/>
            <person name="Rost B."/>
            <person name="Ruan Y."/>
            <person name="Salzberg S.L."/>
            <person name="Sandelin A."/>
            <person name="Schneider C."/>
            <person name="Schoenbach C."/>
            <person name="Sekiguchi K."/>
            <person name="Semple C.A."/>
            <person name="Seno S."/>
            <person name="Sessa L."/>
            <person name="Sheng Y."/>
            <person name="Shibata Y."/>
            <person name="Shimada H."/>
            <person name="Shimada K."/>
            <person name="Silva D."/>
            <person name="Sinclair B."/>
            <person name="Sperling S."/>
            <person name="Stupka E."/>
            <person name="Sugiura K."/>
            <person name="Sultana R."/>
            <person name="Takenaka Y."/>
            <person name="Taki K."/>
            <person name="Tammoja K."/>
            <person name="Tan S.L."/>
            <person name="Tang S."/>
            <person name="Taylor M.S."/>
            <person name="Tegner J."/>
            <person name="Teichmann S.A."/>
            <person name="Ueda H.R."/>
            <person name="van Nimwegen E."/>
            <person name="Verardo R."/>
            <person name="Wei C.L."/>
            <person name="Yagi K."/>
            <person name="Yamanishi H."/>
            <person name="Zabarovsky E."/>
            <person name="Zhu S."/>
            <person name="Zimmer A."/>
            <person name="Hide W."/>
            <person name="Bult C."/>
            <person name="Grimmond S.M."/>
            <person name="Teasdale R.D."/>
            <person name="Liu E.T."/>
            <person name="Brusic V."/>
            <person name="Quackenbush J."/>
            <person name="Wahlestedt C."/>
            <person name="Mattick J.S."/>
            <person name="Hume D.A."/>
            <person name="Kai C."/>
            <person name="Sasaki D."/>
            <person name="Tomaru Y."/>
            <person name="Fukuda S."/>
            <person name="Kanamori-Katayama M."/>
            <person name="Suzuki M."/>
            <person name="Aoki J."/>
            <person name="Arakawa T."/>
            <person name="Iida J."/>
            <person name="Imamura K."/>
            <person name="Itoh M."/>
            <person name="Kato T."/>
            <person name="Kawaji H."/>
            <person name="Kawagashira N."/>
            <person name="Kawashima T."/>
            <person name="Kojima M."/>
            <person name="Kondo S."/>
            <person name="Konno H."/>
            <person name="Nakano K."/>
            <person name="Ninomiya N."/>
            <person name="Nishio T."/>
            <person name="Okada M."/>
            <person name="Plessy C."/>
            <person name="Shibata K."/>
            <person name="Shiraki T."/>
            <person name="Suzuki S."/>
            <person name="Tagami M."/>
            <person name="Waki K."/>
            <person name="Watahiki A."/>
            <person name="Okamura-Oho Y."/>
            <person name="Suzuki H."/>
            <person name="Kawai J."/>
            <person name="Hayashizaki Y."/>
        </authorList>
    </citation>
    <scope>NUCLEOTIDE SEQUENCE [LARGE SCALE MRNA] (ISOFORMS 1; 2 AND 4)</scope>
    <source>
        <strain>C57BL/6J</strain>
        <tissue>Embryonic lung</tissue>
        <tissue>Testis</tissue>
    </source>
</reference>
<reference key="3">
    <citation type="journal article" date="2004" name="Genome Res.">
        <title>The status, quality, and expansion of the NIH full-length cDNA project: the Mammalian Gene Collection (MGC).</title>
        <authorList>
            <consortium name="The MGC Project Team"/>
        </authorList>
    </citation>
    <scope>NUCLEOTIDE SEQUENCE [LARGE SCALE MRNA] (ISOFORMS 3 AND 5)</scope>
    <source>
        <strain>FVB/N</strain>
        <tissue>Mammary tumor</tissue>
    </source>
</reference>
<reference key="4">
    <citation type="journal article" date="1997" name="Mech. Dev.">
        <title>Miz1, a novel zinc finger transcription factor that interacts with Msx2 and enhances its affinity for DNA.</title>
        <authorList>
            <person name="Wu L."/>
            <person name="Wu H."/>
            <person name="Ma L."/>
            <person name="Sangiorgi F."/>
            <person name="Wu N."/>
            <person name="Bell J.R."/>
            <person name="Lyons G.E."/>
            <person name="Maxson R."/>
        </authorList>
    </citation>
    <scope>NUCLEOTIDE SEQUENCE [MRNA] OF 124-621 (ISOFORM 1)</scope>
    <scope>INTERACTION WITH MSX2</scope>
    <source>
        <tissue>Embryo</tissue>
    </source>
</reference>
<reference key="5">
    <citation type="journal article" date="1997" name="Mech. Dev.">
        <authorList>
            <person name="Wu L."/>
            <person name="Wu H."/>
            <person name="Ma L."/>
            <person name="Sangiorgi F."/>
            <person name="Wu N."/>
            <person name="Bell J.R."/>
            <person name="Lyons G.E."/>
            <person name="Maxson R."/>
        </authorList>
    </citation>
    <scope>ERRATUM OF PUBMED:9256341</scope>
</reference>
<reference key="6">
    <citation type="journal article" date="2002" name="J. Biol. Chem.">
        <title>The SUMO ubiquitin-protein isopeptide ligase family member Miz1/PIASxbeta/Siz2 is a transcriptional cofactor for TFII-I.</title>
        <authorList>
            <person name="Tussie-Luna M.I."/>
            <person name="Michel B."/>
            <person name="Hakre S."/>
            <person name="Roy A.L."/>
        </authorList>
    </citation>
    <scope>SUBCELLULAR LOCATION</scope>
    <scope>NUCLEAR LOCALIZATION SIGNAL</scope>
    <scope>INTERACTION WITH GTF2I AND GTF2IRD1</scope>
</reference>
<reference key="7">
    <citation type="journal article" date="2002" name="Mol. Cell. Biol.">
        <title>PIAS proteins modulate transcription factors by functioning as SUMO-1 ligases.</title>
        <authorList>
            <person name="Kotaja N."/>
            <person name="Karvonen U."/>
            <person name="Jaenne O.A."/>
            <person name="Palvimo J.J."/>
        </authorList>
    </citation>
    <scope>INTERACTION WITH SUMO1 AND UBE2I</scope>
    <scope>SUBCELLULAR LOCATION</scope>
    <scope>SUMOYLATION</scope>
</reference>
<reference key="8">
    <citation type="journal article" date="2005" name="Mol. Cell. Biol.">
        <title>Ikaros SUMOylation: switching out of repression.</title>
        <authorList>
            <person name="Gomez-del Arco P."/>
            <person name="Koipally J."/>
            <person name="Georgopoulos K."/>
        </authorList>
    </citation>
    <scope>INTERACTION WITH IKFZ1</scope>
</reference>
<reference key="9">
    <citation type="journal article" date="2010" name="Cell">
        <title>A tissue-specific atlas of mouse protein phosphorylation and expression.</title>
        <authorList>
            <person name="Huttlin E.L."/>
            <person name="Jedrychowski M.P."/>
            <person name="Elias J.E."/>
            <person name="Goswami T."/>
            <person name="Rad R."/>
            <person name="Beausoleil S.A."/>
            <person name="Villen J."/>
            <person name="Haas W."/>
            <person name="Sowa M.E."/>
            <person name="Gygi S.P."/>
        </authorList>
    </citation>
    <scope>PHOSPHORYLATION [LARGE SCALE ANALYSIS] AT SER-499</scope>
    <scope>IDENTIFICATION BY MASS SPECTROMETRY [LARGE SCALE ANALYSIS]</scope>
    <source>
        <tissue>Testis</tissue>
    </source>
</reference>
<dbReference type="EC" id="2.3.2.27"/>
<dbReference type="EMBL" id="AF201391">
    <property type="protein sequence ID" value="AAF12825.1"/>
    <property type="molecule type" value="mRNA"/>
</dbReference>
<dbReference type="EMBL" id="AK029716">
    <property type="protein sequence ID" value="BAC26579.1"/>
    <property type="molecule type" value="mRNA"/>
</dbReference>
<dbReference type="EMBL" id="AK014871">
    <property type="protein sequence ID" value="BAB29594.1"/>
    <property type="status" value="ALT_FRAME"/>
    <property type="molecule type" value="mRNA"/>
</dbReference>
<dbReference type="EMBL" id="AK078813">
    <property type="protein sequence ID" value="BAC37407.1"/>
    <property type="molecule type" value="mRNA"/>
</dbReference>
<dbReference type="EMBL" id="AK086653">
    <property type="protein sequence ID" value="BAC39710.1"/>
    <property type="molecule type" value="mRNA"/>
</dbReference>
<dbReference type="EMBL" id="BC005596">
    <property type="protein sequence ID" value="AAH05596.1"/>
    <property type="molecule type" value="mRNA"/>
</dbReference>
<dbReference type="EMBL" id="BC034711">
    <property type="protein sequence ID" value="AAH34711.1"/>
    <property type="molecule type" value="mRNA"/>
</dbReference>
<dbReference type="EMBL" id="AF039567">
    <property type="protein sequence ID" value="AAB96678.1"/>
    <property type="status" value="ALT_INIT"/>
    <property type="molecule type" value="mRNA"/>
</dbReference>
<dbReference type="CCDS" id="CCDS37866.1">
    <molecule id="Q8C5D8-1"/>
</dbReference>
<dbReference type="RefSeq" id="NP_001157639.1">
    <molecule id="Q8C5D8-4"/>
    <property type="nucleotide sequence ID" value="NM_001164167.1"/>
</dbReference>
<dbReference type="RefSeq" id="NP_001157640.1">
    <property type="nucleotide sequence ID" value="NM_001164168.1"/>
</dbReference>
<dbReference type="RefSeq" id="NP_001157641.1">
    <molecule id="Q8C5D8-2"/>
    <property type="nucleotide sequence ID" value="NM_001164169.1"/>
</dbReference>
<dbReference type="RefSeq" id="NP_001157642.1">
    <property type="nucleotide sequence ID" value="NM_001164170.1"/>
</dbReference>
<dbReference type="RefSeq" id="NP_032628.3">
    <molecule id="Q8C5D8-1"/>
    <property type="nucleotide sequence ID" value="NM_008602.4"/>
</dbReference>
<dbReference type="SMR" id="Q8C5D8"/>
<dbReference type="BioGRID" id="201429">
    <property type="interactions" value="15"/>
</dbReference>
<dbReference type="FunCoup" id="Q8C5D8">
    <property type="interactions" value="4064"/>
</dbReference>
<dbReference type="IntAct" id="Q8C5D8">
    <property type="interactions" value="7"/>
</dbReference>
<dbReference type="MINT" id="Q8C5D8"/>
<dbReference type="STRING" id="10090.ENSMUSP00000110425"/>
<dbReference type="iPTMnet" id="Q8C5D8"/>
<dbReference type="PhosphoSitePlus" id="Q8C5D8"/>
<dbReference type="jPOST" id="Q8C5D8"/>
<dbReference type="PaxDb" id="10090-ENSMUSP00000110425"/>
<dbReference type="ProteomicsDB" id="287712">
    <molecule id="Q8C5D8-1"/>
</dbReference>
<dbReference type="ProteomicsDB" id="287713">
    <molecule id="Q8C5D8-2"/>
</dbReference>
<dbReference type="ProteomicsDB" id="287714">
    <molecule id="Q8C5D8-3"/>
</dbReference>
<dbReference type="ProteomicsDB" id="287715">
    <molecule id="Q8C5D8-4"/>
</dbReference>
<dbReference type="ProteomicsDB" id="287716">
    <molecule id="Q8C5D8-5"/>
</dbReference>
<dbReference type="Antibodypedia" id="9110">
    <property type="antibodies" value="527 antibodies from 40 providers"/>
</dbReference>
<dbReference type="DNASU" id="17344"/>
<dbReference type="Ensembl" id="ENSMUST00000114777.10">
    <molecule id="Q8C5D8-1"/>
    <property type="protein sequence ID" value="ENSMUSP00000110425.3"/>
    <property type="gene ID" value="ENSMUSG00000025423.17"/>
</dbReference>
<dbReference type="GeneID" id="17344"/>
<dbReference type="KEGG" id="mmu:17344"/>
<dbReference type="UCSC" id="uc008frb.1">
    <molecule id="Q8C5D8-2"/>
    <property type="organism name" value="mouse"/>
</dbReference>
<dbReference type="UCSC" id="uc008frc.2">
    <molecule id="Q8C5D8-1"/>
    <property type="organism name" value="mouse"/>
</dbReference>
<dbReference type="UCSC" id="uc012bfb.1">
    <molecule id="Q8C5D8-4"/>
    <property type="organism name" value="mouse"/>
</dbReference>
<dbReference type="AGR" id="MGI:1096566"/>
<dbReference type="CTD" id="9063"/>
<dbReference type="MGI" id="MGI:1096566">
    <property type="gene designation" value="Pias2"/>
</dbReference>
<dbReference type="VEuPathDB" id="HostDB:ENSMUSG00000025423"/>
<dbReference type="eggNOG" id="KOG2169">
    <property type="taxonomic scope" value="Eukaryota"/>
</dbReference>
<dbReference type="GeneTree" id="ENSGT01030000234539"/>
<dbReference type="InParanoid" id="Q8C5D8"/>
<dbReference type="OMA" id="DPQQYCP"/>
<dbReference type="OrthoDB" id="10263264at2759"/>
<dbReference type="PhylomeDB" id="Q8C5D8"/>
<dbReference type="TreeFam" id="TF323787"/>
<dbReference type="Reactome" id="R-MMU-3108214">
    <molecule id="Q8C5D8-2"/>
    <property type="pathway name" value="SUMOylation of DNA damage response and repair proteins"/>
</dbReference>
<dbReference type="Reactome" id="R-MMU-3232118">
    <molecule id="Q8C5D8-2"/>
    <property type="pathway name" value="SUMOylation of transcription factors"/>
</dbReference>
<dbReference type="Reactome" id="R-MMU-3232142">
    <molecule id="Q8C5D8-2"/>
    <property type="pathway name" value="SUMOylation of ubiquitinylation proteins"/>
</dbReference>
<dbReference type="Reactome" id="R-MMU-3899300">
    <molecule id="Q8C5D8-2"/>
    <property type="pathway name" value="SUMOylation of transcription cofactors"/>
</dbReference>
<dbReference type="Reactome" id="R-MMU-4090294">
    <molecule id="Q8C5D8-2"/>
    <property type="pathway name" value="SUMOylation of intracellular receptors"/>
</dbReference>
<dbReference type="Reactome" id="R-MMU-4551638">
    <molecule id="Q8C5D8-2"/>
    <property type="pathway name" value="SUMOylation of chromatin organization proteins"/>
</dbReference>
<dbReference type="UniPathway" id="UPA00886"/>
<dbReference type="BioGRID-ORCS" id="17344">
    <property type="hits" value="4 hits in 80 CRISPR screens"/>
</dbReference>
<dbReference type="ChiTaRS" id="Pias2">
    <property type="organism name" value="mouse"/>
</dbReference>
<dbReference type="PRO" id="PR:Q8C5D8"/>
<dbReference type="Proteomes" id="UP000000589">
    <property type="component" value="Chromosome 18"/>
</dbReference>
<dbReference type="RNAct" id="Q8C5D8">
    <property type="molecule type" value="protein"/>
</dbReference>
<dbReference type="Bgee" id="ENSMUSG00000025423">
    <property type="expression patterns" value="Expressed in seminiferous tubule of testis and 273 other cell types or tissues"/>
</dbReference>
<dbReference type="ExpressionAtlas" id="Q8C5D8">
    <property type="expression patterns" value="baseline and differential"/>
</dbReference>
<dbReference type="GO" id="GO:0016604">
    <property type="term" value="C:nuclear body"/>
    <property type="evidence" value="ECO:0000314"/>
    <property type="project" value="MGI"/>
</dbReference>
<dbReference type="GO" id="GO:0016607">
    <property type="term" value="C:nuclear speck"/>
    <property type="evidence" value="ECO:0007669"/>
    <property type="project" value="UniProtKB-SubCell"/>
</dbReference>
<dbReference type="GO" id="GO:0005654">
    <property type="term" value="C:nucleoplasm"/>
    <property type="evidence" value="ECO:0000304"/>
    <property type="project" value="Reactome"/>
</dbReference>
<dbReference type="GO" id="GO:0005634">
    <property type="term" value="C:nucleus"/>
    <property type="evidence" value="ECO:0000314"/>
    <property type="project" value="MGI"/>
</dbReference>
<dbReference type="GO" id="GO:0016605">
    <property type="term" value="C:PML body"/>
    <property type="evidence" value="ECO:0007669"/>
    <property type="project" value="UniProtKB-SubCell"/>
</dbReference>
<dbReference type="GO" id="GO:0003677">
    <property type="term" value="F:DNA binding"/>
    <property type="evidence" value="ECO:0000314"/>
    <property type="project" value="MGI"/>
</dbReference>
<dbReference type="GO" id="GO:0050681">
    <property type="term" value="F:nuclear androgen receptor binding"/>
    <property type="evidence" value="ECO:0000266"/>
    <property type="project" value="MGI"/>
</dbReference>
<dbReference type="GO" id="GO:0061629">
    <property type="term" value="F:RNA polymerase II-specific DNA-binding transcription factor binding"/>
    <property type="evidence" value="ECO:0000353"/>
    <property type="project" value="ParkinsonsUK-UCL"/>
</dbReference>
<dbReference type="GO" id="GO:0061665">
    <property type="term" value="F:SUMO ligase activity"/>
    <property type="evidence" value="ECO:0000250"/>
    <property type="project" value="ParkinsonsUK-UCL"/>
</dbReference>
<dbReference type="GO" id="GO:0019789">
    <property type="term" value="F:SUMO transferase activity"/>
    <property type="evidence" value="ECO:0000314"/>
    <property type="project" value="MGI"/>
</dbReference>
<dbReference type="GO" id="GO:0031625">
    <property type="term" value="F:ubiquitin protein ligase binding"/>
    <property type="evidence" value="ECO:0000353"/>
    <property type="project" value="BHF-UCL"/>
</dbReference>
<dbReference type="GO" id="GO:0008270">
    <property type="term" value="F:zinc ion binding"/>
    <property type="evidence" value="ECO:0007669"/>
    <property type="project" value="UniProtKB-KW"/>
</dbReference>
<dbReference type="GO" id="GO:0006351">
    <property type="term" value="P:DNA-templated transcription"/>
    <property type="evidence" value="ECO:0000314"/>
    <property type="project" value="MGI"/>
</dbReference>
<dbReference type="GO" id="GO:0060766">
    <property type="term" value="P:negative regulation of androgen receptor signaling pathway"/>
    <property type="evidence" value="ECO:0007669"/>
    <property type="project" value="Ensembl"/>
</dbReference>
<dbReference type="GO" id="GO:0045893">
    <property type="term" value="P:positive regulation of DNA-templated transcription"/>
    <property type="evidence" value="ECO:0000314"/>
    <property type="project" value="MGI"/>
</dbReference>
<dbReference type="GO" id="GO:0045944">
    <property type="term" value="P:positive regulation of transcription by RNA polymerase II"/>
    <property type="evidence" value="ECO:0000314"/>
    <property type="project" value="MGI"/>
</dbReference>
<dbReference type="GO" id="GO:0016925">
    <property type="term" value="P:protein sumoylation"/>
    <property type="evidence" value="ECO:0000314"/>
    <property type="project" value="MGI"/>
</dbReference>
<dbReference type="GO" id="GO:0060765">
    <property type="term" value="P:regulation of androgen receptor signaling pathway"/>
    <property type="evidence" value="ECO:0000266"/>
    <property type="project" value="MGI"/>
</dbReference>
<dbReference type="GO" id="GO:0045667">
    <property type="term" value="P:regulation of osteoblast differentiation"/>
    <property type="evidence" value="ECO:0000315"/>
    <property type="project" value="MGI"/>
</dbReference>
<dbReference type="GO" id="GO:0006357">
    <property type="term" value="P:regulation of transcription by RNA polymerase II"/>
    <property type="evidence" value="ECO:0000314"/>
    <property type="project" value="MGI"/>
</dbReference>
<dbReference type="CDD" id="cd16819">
    <property type="entry name" value="SP-RING_PIAS2"/>
    <property type="match status" value="1"/>
</dbReference>
<dbReference type="FunFam" id="1.10.720.30:FF:000001">
    <property type="entry name" value="E3 SUMO-protein ligase PIAS2 isoform 1"/>
    <property type="match status" value="1"/>
</dbReference>
<dbReference type="FunFam" id="2.60.120.780:FF:000001">
    <property type="entry name" value="E3 SUMO-protein ligase PIAS2 isoform X1"/>
    <property type="match status" value="1"/>
</dbReference>
<dbReference type="FunFam" id="3.30.40.10:FF:000003">
    <property type="entry name" value="E3 SUMO-protein ligase PIAS2 isoform X1"/>
    <property type="match status" value="1"/>
</dbReference>
<dbReference type="Gene3D" id="2.60.120.780">
    <property type="entry name" value="PINIT domain"/>
    <property type="match status" value="1"/>
</dbReference>
<dbReference type="Gene3D" id="1.10.720.30">
    <property type="entry name" value="SAP domain"/>
    <property type="match status" value="1"/>
</dbReference>
<dbReference type="Gene3D" id="3.30.40.10">
    <property type="entry name" value="Zinc/RING finger domain, C3HC4 (zinc finger)"/>
    <property type="match status" value="1"/>
</dbReference>
<dbReference type="InterPro" id="IPR023321">
    <property type="entry name" value="PINIT"/>
</dbReference>
<dbReference type="InterPro" id="IPR038654">
    <property type="entry name" value="PINIT_sf"/>
</dbReference>
<dbReference type="InterPro" id="IPR003034">
    <property type="entry name" value="SAP_dom"/>
</dbReference>
<dbReference type="InterPro" id="IPR036361">
    <property type="entry name" value="SAP_dom_sf"/>
</dbReference>
<dbReference type="InterPro" id="IPR004181">
    <property type="entry name" value="Znf_MIZ"/>
</dbReference>
<dbReference type="InterPro" id="IPR013083">
    <property type="entry name" value="Znf_RING/FYVE/PHD"/>
</dbReference>
<dbReference type="PANTHER" id="PTHR10782:SF12">
    <property type="entry name" value="E3 SUMO-PROTEIN LIGASE PIAS2"/>
    <property type="match status" value="1"/>
</dbReference>
<dbReference type="PANTHER" id="PTHR10782">
    <property type="entry name" value="ZINC FINGER MIZ DOMAIN-CONTAINING PROTEIN"/>
    <property type="match status" value="1"/>
</dbReference>
<dbReference type="Pfam" id="PF14324">
    <property type="entry name" value="PINIT"/>
    <property type="match status" value="1"/>
</dbReference>
<dbReference type="Pfam" id="PF02037">
    <property type="entry name" value="SAP"/>
    <property type="match status" value="1"/>
</dbReference>
<dbReference type="Pfam" id="PF02891">
    <property type="entry name" value="zf-MIZ"/>
    <property type="match status" value="1"/>
</dbReference>
<dbReference type="SMART" id="SM00513">
    <property type="entry name" value="SAP"/>
    <property type="match status" value="1"/>
</dbReference>
<dbReference type="SUPFAM" id="SSF68906">
    <property type="entry name" value="SAP domain"/>
    <property type="match status" value="1"/>
</dbReference>
<dbReference type="PROSITE" id="PS51466">
    <property type="entry name" value="PINIT"/>
    <property type="match status" value="1"/>
</dbReference>
<dbReference type="PROSITE" id="PS50800">
    <property type="entry name" value="SAP"/>
    <property type="match status" value="1"/>
</dbReference>
<dbReference type="PROSITE" id="PS51044">
    <property type="entry name" value="ZF_SP_RING"/>
    <property type="match status" value="1"/>
</dbReference>
<name>PIAS2_MOUSE</name>
<organism>
    <name type="scientific">Mus musculus</name>
    <name type="common">Mouse</name>
    <dbReference type="NCBI Taxonomy" id="10090"/>
    <lineage>
        <taxon>Eukaryota</taxon>
        <taxon>Metazoa</taxon>
        <taxon>Chordata</taxon>
        <taxon>Craniata</taxon>
        <taxon>Vertebrata</taxon>
        <taxon>Euteleostomi</taxon>
        <taxon>Mammalia</taxon>
        <taxon>Eutheria</taxon>
        <taxon>Euarchontoglires</taxon>
        <taxon>Glires</taxon>
        <taxon>Rodentia</taxon>
        <taxon>Myomorpha</taxon>
        <taxon>Muroidea</taxon>
        <taxon>Muridae</taxon>
        <taxon>Murinae</taxon>
        <taxon>Mus</taxon>
        <taxon>Mus</taxon>
    </lineage>
</organism>
<proteinExistence type="evidence at protein level"/>
<sequence>MADFEELRNMVSSFRVSELQVLLGFAGRNKSGRKHDLLMRALHLLKSGCSPAVQIKIRELYRRRYPRTLEGLCDLSTIKSSVFSLDGSSSPVEPDLPVAGIHSLPSTSITPHSPSSPVGSVLLQDTKPTFEMQQPSPPIPPVHPDVQLKNLPFYDVLDVLIKPTSLVQSSIQRFQEKFFIFALTPQQVREICISRDFLPGGRRDYTVQVQLRLCLAETSCPQEDNYPNSLCIKVNGKLFPLPGYAPPPKNGIEQKRPGRPLNITSLVRLSSAVPNQISISWASEIGKNYSMSVYLVRQLTSAMLLQRLKMKGIRNPDHSRALIKEKLTADPDSEIATTSLRVSLMCPLGKMRLTIPCRAVTCTHLQCFDAALYLQMNEKKPTWICPVCDKKAAYESLILDGLFMEILNDCSDVDEIKFQEDGSWCPMRPKKEAMKVTSQPCTKVESSSVFSKPCSVTVASDASKKKIDVIDLTIESSSDEEEDPPAKRKCIFMSETQSSPTKGVLMYQPSSVRVPSVTSVDPAAIPPSLTDYSVPFHHTPVSSMSSDLPGLDFLSLIPVDPQYCPPMFLDSLTSPLTASSTSVTTTSPHESSTHVSSSSSRSETGVITSSGRNIPDIISLD</sequence>
<evidence type="ECO:0000250" key="1"/>
<evidence type="ECO:0000250" key="2">
    <source>
        <dbReference type="UniProtKB" id="O75928"/>
    </source>
</evidence>
<evidence type="ECO:0000255" key="3">
    <source>
        <dbReference type="PROSITE-ProRule" id="PRU00186"/>
    </source>
</evidence>
<evidence type="ECO:0000255" key="4">
    <source>
        <dbReference type="PROSITE-ProRule" id="PRU00452"/>
    </source>
</evidence>
<evidence type="ECO:0000255" key="5">
    <source>
        <dbReference type="PROSITE-ProRule" id="PRU00799"/>
    </source>
</evidence>
<evidence type="ECO:0000256" key="6">
    <source>
        <dbReference type="SAM" id="MobiDB-lite"/>
    </source>
</evidence>
<evidence type="ECO:0000269" key="7">
    <source>
    </source>
</evidence>
<evidence type="ECO:0000269" key="8">
    <source>
    </source>
</evidence>
<evidence type="ECO:0000303" key="9">
    <source>
    </source>
</evidence>
<evidence type="ECO:0000303" key="10">
    <source>
    </source>
</evidence>
<evidence type="ECO:0000303" key="11">
    <source>
    </source>
</evidence>
<evidence type="ECO:0000305" key="12"/>
<evidence type="ECO:0007744" key="13">
    <source>
    </source>
</evidence>
<protein>
    <recommendedName>
        <fullName>E3 SUMO-protein ligase PIAS2</fullName>
        <ecNumber>2.3.2.27</ecNumber>
    </recommendedName>
    <alternativeName>
        <fullName>Androgen receptor-interacting protein 3</fullName>
        <shortName>ARIP3</shortName>
    </alternativeName>
    <alternativeName>
        <fullName>DAB2-interacting protein</fullName>
        <shortName>DIP</shortName>
    </alternativeName>
    <alternativeName>
        <fullName>Msx-interacting zinc finger protein</fullName>
    </alternativeName>
    <alternativeName>
        <fullName>Protein inhibitor of activated STAT x</fullName>
    </alternativeName>
    <alternativeName>
        <fullName>Protein inhibitor of activated STAT2</fullName>
    </alternativeName>
    <alternativeName>
        <fullName evidence="12">RING-type E3 ubiquitin transferase PIAS2</fullName>
    </alternativeName>
</protein>
<feature type="chain" id="PRO_0000218977" description="E3 SUMO-protein ligase PIAS2">
    <location>
        <begin position="1"/>
        <end position="621"/>
    </location>
</feature>
<feature type="domain" description="SAP" evidence="3">
    <location>
        <begin position="11"/>
        <end position="45"/>
    </location>
</feature>
<feature type="domain" description="PINIT" evidence="5">
    <location>
        <begin position="134"/>
        <end position="299"/>
    </location>
</feature>
<feature type="zinc finger region" description="SP-RING-type" evidence="4">
    <location>
        <begin position="331"/>
        <end position="412"/>
    </location>
</feature>
<feature type="region of interest" description="SUMO1-binding" evidence="1">
    <location>
        <begin position="467"/>
        <end position="473"/>
    </location>
</feature>
<feature type="region of interest" description="Disordered" evidence="6">
    <location>
        <begin position="577"/>
        <end position="621"/>
    </location>
</feature>
<feature type="short sequence motif" description="LXXLL motif">
    <location>
        <begin position="19"/>
        <end position="23"/>
    </location>
</feature>
<feature type="short sequence motif" description="Nuclear localization signal" evidence="8">
    <location>
        <begin position="484"/>
        <end position="492"/>
    </location>
</feature>
<feature type="compositionally biased region" description="Low complexity" evidence="6">
    <location>
        <begin position="577"/>
        <end position="610"/>
    </location>
</feature>
<feature type="binding site" evidence="4">
    <location>
        <position position="362"/>
    </location>
    <ligand>
        <name>Zn(2+)</name>
        <dbReference type="ChEBI" id="CHEBI:29105"/>
    </ligand>
</feature>
<feature type="binding site" evidence="4">
    <location>
        <position position="364"/>
    </location>
    <ligand>
        <name>Zn(2+)</name>
        <dbReference type="ChEBI" id="CHEBI:29105"/>
    </ligand>
</feature>
<feature type="binding site" evidence="4">
    <location>
        <position position="385"/>
    </location>
    <ligand>
        <name>Zn(2+)</name>
        <dbReference type="ChEBI" id="CHEBI:29105"/>
    </ligand>
</feature>
<feature type="binding site" evidence="4">
    <location>
        <position position="388"/>
    </location>
    <ligand>
        <name>Zn(2+)</name>
        <dbReference type="ChEBI" id="CHEBI:29105"/>
    </ligand>
</feature>
<feature type="modified residue" description="Phosphoserine" evidence="2">
    <location>
        <position position="476"/>
    </location>
</feature>
<feature type="modified residue" description="Phosphoserine" evidence="2">
    <location>
        <position position="477"/>
    </location>
</feature>
<feature type="modified residue" description="Phosphoserine" evidence="2">
    <location>
        <position position="478"/>
    </location>
</feature>
<feature type="modified residue" description="Phosphoserine" evidence="13">
    <location>
        <position position="499"/>
    </location>
</feature>
<feature type="cross-link" description="Glycyl lysine isopeptide (Lys-Gly) (interchain with G-Cter in SUMO2)" evidence="2">
    <location>
        <position position="46"/>
    </location>
</feature>
<feature type="cross-link" description="Glycyl lysine isopeptide (Lys-Gly) (interchain with G-Cter in SUMO2)" evidence="2">
    <location>
        <position position="249"/>
    </location>
</feature>
<feature type="cross-link" description="Glycyl lysine isopeptide (Lys-Gly) (interchain with G-Cter in SUMO2)" evidence="2">
    <location>
        <position position="430"/>
    </location>
</feature>
<feature type="cross-link" description="Glycyl lysine isopeptide (Lys-Gly) (interchain with G-Cter in SUMO2)" evidence="2">
    <location>
        <position position="435"/>
    </location>
</feature>
<feature type="cross-link" description="Glycyl lysine isopeptide (Lys-Gly) (interchain with G-Cter in SUMO2)" evidence="2">
    <location>
        <position position="443"/>
    </location>
</feature>
<feature type="cross-link" description="Glycyl lysine isopeptide (Lys-Gly) (interchain with G-Cter in SUMO2)" evidence="2">
    <location>
        <position position="452"/>
    </location>
</feature>
<feature type="cross-link" description="Glycyl lysine isopeptide (Lys-Gly) (interchain with G-Cter in SUMO2)" evidence="2">
    <location>
        <position position="489"/>
    </location>
</feature>
<feature type="cross-link" description="Glycyl lysine isopeptide (Lys-Gly) (interchain with G-Cter in SUMO2)" evidence="2">
    <location>
        <position position="502"/>
    </location>
</feature>
<feature type="splice variant" id="VSP_012198" description="In isoform 3 and isoform 5." evidence="10">
    <location>
        <begin position="1"/>
        <end position="9"/>
    </location>
</feature>
<feature type="splice variant" id="VSP_012199" description="In isoform 2 and isoform 3." evidence="9 10 11">
    <original>LDFLSLIPVDPQYCPPMFLDSL</original>
    <variation>EQRRNDINNEVQLGASSDTVQQ</variation>
    <location>
        <begin position="551"/>
        <end position="572"/>
    </location>
</feature>
<feature type="splice variant" id="VSP_012200" description="In isoform 4." evidence="11">
    <original>YCPPMFLDSLTSPLTASS</original>
    <variation>SHLTLNSKQYVCHHHQPP</variation>
    <location>
        <begin position="563"/>
        <end position="580"/>
    </location>
</feature>
<feature type="splice variant" id="VSP_012201" description="In isoform 2 and isoform 3." evidence="9 10 11">
    <location>
        <begin position="573"/>
        <end position="621"/>
    </location>
</feature>
<feature type="splice variant" id="VSP_012202" description="In isoform 4." evidence="11">
    <location>
        <begin position="581"/>
        <end position="621"/>
    </location>
</feature>
<feature type="sequence conflict" description="In Ref. 1; AAF12825." evidence="12" ref="1">
    <original>C</original>
    <variation>S</variation>
    <location>
        <position position="73"/>
    </location>
</feature>
<feature type="sequence conflict" description="In Ref. 1; AAF12825." evidence="12" ref="1">
    <original>P</original>
    <variation>A</variation>
    <location>
        <position position="97"/>
    </location>
</feature>
<feature type="sequence conflict" description="In Ref. 1; AAF12825." evidence="12" ref="1">
    <original>T</original>
    <variation>A</variation>
    <location>
        <position position="110"/>
    </location>
</feature>
<feature type="sequence conflict" description="In Ref. 1; AAF12825." evidence="12" ref="1">
    <original>G</original>
    <variation>E</variation>
    <location>
        <position position="119"/>
    </location>
</feature>
<feature type="sequence conflict" description="In Ref. 1; AAF12825." evidence="12" ref="1">
    <original>N</original>
    <variation>T</variation>
    <location>
        <position position="150"/>
    </location>
</feature>
<feature type="sequence conflict" description="In Ref. 1; AAF12825." evidence="12" ref="1">
    <original>D</original>
    <variation>E</variation>
    <location>
        <position position="158"/>
    </location>
</feature>
<feature type="sequence conflict" description="In Ref. 2; BAC26579." evidence="12" ref="2">
    <original>R</original>
    <variation>G</variation>
    <location>
        <position position="173"/>
    </location>
</feature>
<feature type="sequence conflict" description="In Ref. 1; AAF12825." evidence="12" ref="1">
    <original>G</original>
    <variation>A</variation>
    <location>
        <position position="243"/>
    </location>
</feature>
<feature type="sequence conflict" description="In Ref. 1; AAF12825." evidence="12" ref="1">
    <original>N</original>
    <variation>Q</variation>
    <location>
        <position position="288"/>
    </location>
</feature>
<feature type="sequence conflict" description="In Ref. 1; AAF12825." evidence="12" ref="1">
    <original>R</original>
    <variation>K</variation>
    <location>
        <position position="320"/>
    </location>
</feature>
<feature type="sequence conflict" description="In Ref. 1; AAF12825." evidence="12" ref="1">
    <original>L</original>
    <variation>P</variation>
    <location>
        <position position="327"/>
    </location>
</feature>
<feature type="sequence conflict" description="In Ref. 1; AAF12825." evidence="12" ref="1">
    <original>Q</original>
    <variation>R</variation>
    <location>
        <position position="375"/>
    </location>
</feature>
<feature type="sequence conflict" description="In Ref. 1; AAF12825." evidence="12" ref="1">
    <original>V</original>
    <variation>A</variation>
    <location>
        <position position="413"/>
    </location>
</feature>
<feature type="sequence conflict" description="In Ref. 2; BAC37407." evidence="12" ref="2">
    <original>S</original>
    <variation>I</variation>
    <location>
        <position position="438"/>
    </location>
</feature>
<feature type="sequence conflict" description="In Ref. 1; AAF12825." evidence="12" ref="1">
    <original>V</original>
    <variation>G</variation>
    <location>
        <position position="458"/>
    </location>
</feature>
<feature type="sequence conflict" description="In Ref. 1; AAF12825." evidence="12" ref="1">
    <original>KKK</original>
    <variation>GTR</variation>
    <location>
        <begin position="464"/>
        <end position="466"/>
    </location>
</feature>
<feature type="sequence conflict" description="In Ref. 1; AAF12825." evidence="12" ref="1">
    <original>N</original>
    <variation>T</variation>
    <location sequence="Q8C5D8-2">
        <position position="555"/>
    </location>
</feature>
<gene>
    <name type="primary">Pias2</name>
    <name type="synonym">Miz1</name>
    <name type="synonym">Piasx</name>
</gene>
<accession>Q8C5D8</accession>
<accession>O54987</accession>
<accession>Q8C384</accession>
<accession>Q8CDQ8</accession>
<accession>Q8K208</accession>
<accession>Q99JX5</accession>
<accession>Q9D5W7</accession>
<accession>Q9QZ63</accession>
<keyword id="KW-0025">Alternative splicing</keyword>
<keyword id="KW-0238">DNA-binding</keyword>
<keyword id="KW-1017">Isopeptide bond</keyword>
<keyword id="KW-0479">Metal-binding</keyword>
<keyword id="KW-0539">Nucleus</keyword>
<keyword id="KW-0597">Phosphoprotein</keyword>
<keyword id="KW-1185">Reference proteome</keyword>
<keyword id="KW-0804">Transcription</keyword>
<keyword id="KW-0805">Transcription regulation</keyword>
<keyword id="KW-0808">Transferase</keyword>
<keyword id="KW-0832">Ubl conjugation</keyword>
<keyword id="KW-0833">Ubl conjugation pathway</keyword>
<keyword id="KW-0862">Zinc</keyword>
<keyword id="KW-0863">Zinc-finger</keyword>